<protein>
    <recommendedName>
        <fullName evidence="1">Membrane protein insertase YidC</fullName>
    </recommendedName>
    <alternativeName>
        <fullName evidence="1">Foldase YidC</fullName>
    </alternativeName>
    <alternativeName>
        <fullName evidence="1">Membrane integrase YidC</fullName>
    </alternativeName>
    <alternativeName>
        <fullName evidence="1">Membrane protein YidC</fullName>
    </alternativeName>
</protein>
<evidence type="ECO:0000255" key="1">
    <source>
        <dbReference type="HAMAP-Rule" id="MF_01810"/>
    </source>
</evidence>
<comment type="function">
    <text evidence="1">Required for the insertion and/or proper folding and/or complex formation of integral membrane proteins into the membrane. Involved in integration of membrane proteins that insert both dependently and independently of the Sec translocase complex, as well as at least some lipoproteins. Aids folding of multispanning membrane proteins.</text>
</comment>
<comment type="subunit">
    <text evidence="1">Interacts with the Sec translocase complex via SecD. Specifically interacts with transmembrane segments of nascent integral membrane proteins during membrane integration.</text>
</comment>
<comment type="subcellular location">
    <subcellularLocation>
        <location evidence="1">Cell inner membrane</location>
        <topology evidence="1">Multi-pass membrane protein</topology>
    </subcellularLocation>
</comment>
<comment type="similarity">
    <text evidence="1">Belongs to the OXA1/ALB3/YidC family. Type 1 subfamily.</text>
</comment>
<organism>
    <name type="scientific">Rickettsia conorii (strain ATCC VR-613 / Malish 7)</name>
    <dbReference type="NCBI Taxonomy" id="272944"/>
    <lineage>
        <taxon>Bacteria</taxon>
        <taxon>Pseudomonadati</taxon>
        <taxon>Pseudomonadota</taxon>
        <taxon>Alphaproteobacteria</taxon>
        <taxon>Rickettsiales</taxon>
        <taxon>Rickettsiaceae</taxon>
        <taxon>Rickettsieae</taxon>
        <taxon>Rickettsia</taxon>
        <taxon>spotted fever group</taxon>
    </lineage>
</organism>
<reference key="1">
    <citation type="journal article" date="2001" name="Science">
        <title>Mechanisms of evolution in Rickettsia conorii and R. prowazekii.</title>
        <authorList>
            <person name="Ogata H."/>
            <person name="Audic S."/>
            <person name="Renesto-Audiffren P."/>
            <person name="Fournier P.-E."/>
            <person name="Barbe V."/>
            <person name="Samson D."/>
            <person name="Roux V."/>
            <person name="Cossart P."/>
            <person name="Weissenbach J."/>
            <person name="Claverie J.-M."/>
            <person name="Raoult D."/>
        </authorList>
    </citation>
    <scope>NUCLEOTIDE SEQUENCE [LARGE SCALE GENOMIC DNA]</scope>
    <source>
        <strain>ATCC VR-613 / Malish 7</strain>
    </source>
</reference>
<feature type="chain" id="PRO_0000124749" description="Membrane protein insertase YidC">
    <location>
        <begin position="1"/>
        <end position="560"/>
    </location>
</feature>
<feature type="transmembrane region" description="Helical" evidence="1">
    <location>
        <begin position="5"/>
        <end position="25"/>
    </location>
</feature>
<feature type="transmembrane region" description="Helical" evidence="1">
    <location>
        <begin position="334"/>
        <end position="354"/>
    </location>
</feature>
<feature type="transmembrane region" description="Helical" evidence="1">
    <location>
        <begin position="357"/>
        <end position="377"/>
    </location>
</feature>
<feature type="transmembrane region" description="Helical" evidence="1">
    <location>
        <begin position="431"/>
        <end position="451"/>
    </location>
</feature>
<feature type="transmembrane region" description="Helical" evidence="1">
    <location>
        <begin position="476"/>
        <end position="496"/>
    </location>
</feature>
<feature type="transmembrane region" description="Helical" evidence="1">
    <location>
        <begin position="522"/>
        <end position="542"/>
    </location>
</feature>
<gene>
    <name evidence="1" type="primary">yidC</name>
    <name type="ordered locus">RC0074</name>
</gene>
<name>YIDC_RICCN</name>
<proteinExistence type="inferred from homology"/>
<keyword id="KW-0997">Cell inner membrane</keyword>
<keyword id="KW-1003">Cell membrane</keyword>
<keyword id="KW-0143">Chaperone</keyword>
<keyword id="KW-0472">Membrane</keyword>
<keyword id="KW-0653">Protein transport</keyword>
<keyword id="KW-0812">Transmembrane</keyword>
<keyword id="KW-1133">Transmembrane helix</keyword>
<keyword id="KW-0813">Transport</keyword>
<accession>Q92JJ3</accession>
<dbReference type="EMBL" id="AE006914">
    <property type="protein sequence ID" value="AAL02612.1"/>
    <property type="molecule type" value="Genomic_DNA"/>
</dbReference>
<dbReference type="PIR" id="B97709">
    <property type="entry name" value="B97709"/>
</dbReference>
<dbReference type="RefSeq" id="WP_010976759.1">
    <property type="nucleotide sequence ID" value="NC_003103.1"/>
</dbReference>
<dbReference type="SMR" id="Q92JJ3"/>
<dbReference type="GeneID" id="928590"/>
<dbReference type="KEGG" id="rco:RC0074"/>
<dbReference type="PATRIC" id="fig|272944.4.peg.87"/>
<dbReference type="HOGENOM" id="CLU_016535_1_0_5"/>
<dbReference type="Proteomes" id="UP000000816">
    <property type="component" value="Chromosome"/>
</dbReference>
<dbReference type="GO" id="GO:0005886">
    <property type="term" value="C:plasma membrane"/>
    <property type="evidence" value="ECO:0007669"/>
    <property type="project" value="UniProtKB-SubCell"/>
</dbReference>
<dbReference type="GO" id="GO:0032977">
    <property type="term" value="F:membrane insertase activity"/>
    <property type="evidence" value="ECO:0007669"/>
    <property type="project" value="InterPro"/>
</dbReference>
<dbReference type="GO" id="GO:0051205">
    <property type="term" value="P:protein insertion into membrane"/>
    <property type="evidence" value="ECO:0007669"/>
    <property type="project" value="TreeGrafter"/>
</dbReference>
<dbReference type="GO" id="GO:0015031">
    <property type="term" value="P:protein transport"/>
    <property type="evidence" value="ECO:0007669"/>
    <property type="project" value="UniProtKB-KW"/>
</dbReference>
<dbReference type="CDD" id="cd20070">
    <property type="entry name" value="5TM_YidC_Alb3"/>
    <property type="match status" value="1"/>
</dbReference>
<dbReference type="CDD" id="cd19961">
    <property type="entry name" value="EcYidC-like_peri"/>
    <property type="match status" value="1"/>
</dbReference>
<dbReference type="Gene3D" id="2.70.98.90">
    <property type="match status" value="1"/>
</dbReference>
<dbReference type="HAMAP" id="MF_01810">
    <property type="entry name" value="YidC_type1"/>
    <property type="match status" value="1"/>
</dbReference>
<dbReference type="InterPro" id="IPR019998">
    <property type="entry name" value="Membr_insert_YidC"/>
</dbReference>
<dbReference type="InterPro" id="IPR028053">
    <property type="entry name" value="Membr_insert_YidC_N"/>
</dbReference>
<dbReference type="InterPro" id="IPR001708">
    <property type="entry name" value="YidC/ALB3/OXA1/COX18"/>
</dbReference>
<dbReference type="InterPro" id="IPR028055">
    <property type="entry name" value="YidC/Oxa/ALB_C"/>
</dbReference>
<dbReference type="InterPro" id="IPR047196">
    <property type="entry name" value="YidC_ALB_C"/>
</dbReference>
<dbReference type="InterPro" id="IPR038221">
    <property type="entry name" value="YidC_periplasmic_sf"/>
</dbReference>
<dbReference type="NCBIfam" id="NF002353">
    <property type="entry name" value="PRK01318.1-4"/>
    <property type="match status" value="1"/>
</dbReference>
<dbReference type="NCBIfam" id="TIGR03593">
    <property type="entry name" value="yidC_nterm"/>
    <property type="match status" value="1"/>
</dbReference>
<dbReference type="NCBIfam" id="TIGR03592">
    <property type="entry name" value="yidC_oxa1_cterm"/>
    <property type="match status" value="1"/>
</dbReference>
<dbReference type="PANTHER" id="PTHR12428:SF65">
    <property type="entry name" value="CYTOCHROME C OXIDASE ASSEMBLY PROTEIN COX18, MITOCHONDRIAL"/>
    <property type="match status" value="1"/>
</dbReference>
<dbReference type="PANTHER" id="PTHR12428">
    <property type="entry name" value="OXA1"/>
    <property type="match status" value="1"/>
</dbReference>
<dbReference type="Pfam" id="PF02096">
    <property type="entry name" value="60KD_IMP"/>
    <property type="match status" value="1"/>
</dbReference>
<dbReference type="Pfam" id="PF14849">
    <property type="entry name" value="YidC_periplas"/>
    <property type="match status" value="1"/>
</dbReference>
<dbReference type="PRINTS" id="PR00701">
    <property type="entry name" value="60KDINNERMP"/>
</dbReference>
<dbReference type="PRINTS" id="PR01900">
    <property type="entry name" value="YIDCPROTEIN"/>
</dbReference>
<sequence length="560" mass="64444">MNNNIINLIAAIILSLSIIFGWQYFVVKPEQKKQQQQIAVQKAENLKKQQLKALVEPATGIVVQEESQVQRIKIESESLTGSISLKGLRFDDLILKKYKQDLSKNSPEVRLFSPANTENAYFAEVGLVSNLSSVKLPNNDTIWNSDSEILSPEKPVHLFWVNEDGVKFLVTITVDENYLFTIEQTIVNNSDKELPVQSYGLINRKYIAVEKAVNILHQGPIGCIDENLKEYSYDDIKDKKSEKFAASKVDWIGITDKYWLSSLIPDKSSNYSSNFNYALKQGTERYQVDFISPVQIIKPGENFSIKSRIFAGAKKVDLLDKYEKQYDIKLFDRAIDFGWFYIITKPVFYAMNFFYGYVGNFGVSILIVTVIIKLLMFTLANKSYRSMKKMKNLQPEIDRIKNLYSDDKARLNQEIMALYKKEKVNPVAGCLPILVQIPVFFSIYKVLYVTIEMRQAPFYGWIKDLSASDPTTIFNLFGLLPFSPPSFLMIGAWPILMAITMFLQQKMSPEPADPMQAQVMKFMPLIFLFMFSSFPVGLLIYWSWNNILSIIQQYYINKFN</sequence>